<comment type="function">
    <text evidence="4">FAD-dependent monooxygenase; part of the gene cluster that mediates the biosynthesis of depudecin, a highly oxidized eleven-carbon linear polyketide that acts as a histone deacetylase (HDAC) inhibitor and makes a small contribution to pathogenesis (PubMed:19737099). The reducing polyketide synthase DEP5 is the central enzyme in depudecin biosynthesis by yielding the backbone polyketide chain (PubMed:19737099). The monooxygenases DEP2 and DEP4, as well as the uncharacterized protein DEP1, then act as tailoring enzymes to modify the intermediate polyketide chain into depudecin (PubMed:19737099).</text>
</comment>
<comment type="cofactor">
    <cofactor evidence="6">
        <name>FAD</name>
        <dbReference type="ChEBI" id="CHEBI:57692"/>
    </cofactor>
</comment>
<comment type="pathway">
    <text evidence="4">Polyketide biosynthesis.</text>
</comment>
<comment type="subcellular location">
    <subcellularLocation>
        <location evidence="2">Membrane</location>
        <topology evidence="2">Single-pass type I membrane protein</topology>
    </subcellularLocation>
</comment>
<comment type="induction">
    <text evidence="4">Expression is positively regulated by the depudecin biosynthesis cluster-specific transcription activator DEP6 (PubMed:19737099).</text>
</comment>
<comment type="disruption phenotype">
    <text evidence="4">Impairs the production of depudecin and accumulates an epoxide-containing metabolite of slightly higher retention factor than native depudecin (PubMed:19737099).</text>
</comment>
<comment type="similarity">
    <text evidence="6">Belongs to the paxM FAD-dependent monooxygenase family.</text>
</comment>
<accession>D2E9W7</accession>
<proteinExistence type="evidence at transcript level"/>
<evidence type="ECO:0000250" key="1">
    <source>
        <dbReference type="UniProtKB" id="B8M9J8"/>
    </source>
</evidence>
<evidence type="ECO:0000255" key="2"/>
<evidence type="ECO:0000255" key="3">
    <source>
        <dbReference type="PROSITE-ProRule" id="PRU00498"/>
    </source>
</evidence>
<evidence type="ECO:0000269" key="4">
    <source>
    </source>
</evidence>
<evidence type="ECO:0000303" key="5">
    <source>
    </source>
</evidence>
<evidence type="ECO:0000305" key="6"/>
<evidence type="ECO:0000305" key="7">
    <source>
    </source>
</evidence>
<gene>
    <name evidence="5" type="primary">DEP2</name>
</gene>
<feature type="signal peptide" evidence="2">
    <location>
        <begin position="1"/>
        <end position="23"/>
    </location>
</feature>
<feature type="chain" id="PRO_0000441937" description="FAD-dependent monooxygenase DEP2">
    <location>
        <begin position="24"/>
        <end position="528"/>
    </location>
</feature>
<feature type="transmembrane region" description="Helical" evidence="2">
    <location>
        <begin position="479"/>
        <end position="499"/>
    </location>
</feature>
<feature type="binding site" evidence="1">
    <location>
        <position position="37"/>
    </location>
    <ligand>
        <name>FAD</name>
        <dbReference type="ChEBI" id="CHEBI:57692"/>
    </ligand>
</feature>
<feature type="binding site" evidence="1">
    <location>
        <position position="110"/>
    </location>
    <ligand>
        <name>FAD</name>
        <dbReference type="ChEBI" id="CHEBI:57692"/>
    </ligand>
</feature>
<feature type="binding site" evidence="1">
    <location>
        <position position="311"/>
    </location>
    <ligand>
        <name>FAD</name>
        <dbReference type="ChEBI" id="CHEBI:57692"/>
    </ligand>
</feature>
<feature type="binding site" evidence="1">
    <location>
        <position position="324"/>
    </location>
    <ligand>
        <name>FAD</name>
        <dbReference type="ChEBI" id="CHEBI:57692"/>
    </ligand>
</feature>
<feature type="glycosylation site" description="N-linked (GlcNAc...) asparagine" evidence="3">
    <location>
        <position position="521"/>
    </location>
</feature>
<name>DEP2_ALTBR</name>
<dbReference type="EC" id="1.-.-.-" evidence="7"/>
<dbReference type="EMBL" id="FJ977165">
    <property type="protein sequence ID" value="ACZ57545.1"/>
    <property type="molecule type" value="Genomic_DNA"/>
</dbReference>
<dbReference type="SMR" id="D2E9W7"/>
<dbReference type="GlyCosmos" id="D2E9W7">
    <property type="glycosylation" value="1 site, No reported glycans"/>
</dbReference>
<dbReference type="PHI-base" id="PHI:2376"/>
<dbReference type="GO" id="GO:0016020">
    <property type="term" value="C:membrane"/>
    <property type="evidence" value="ECO:0007669"/>
    <property type="project" value="UniProtKB-SubCell"/>
</dbReference>
<dbReference type="GO" id="GO:0071949">
    <property type="term" value="F:FAD binding"/>
    <property type="evidence" value="ECO:0007669"/>
    <property type="project" value="InterPro"/>
</dbReference>
<dbReference type="GO" id="GO:0004497">
    <property type="term" value="F:monooxygenase activity"/>
    <property type="evidence" value="ECO:0007669"/>
    <property type="project" value="UniProtKB-KW"/>
</dbReference>
<dbReference type="Gene3D" id="3.50.50.60">
    <property type="entry name" value="FAD/NAD(P)-binding domain"/>
    <property type="match status" value="1"/>
</dbReference>
<dbReference type="InterPro" id="IPR002938">
    <property type="entry name" value="FAD-bd"/>
</dbReference>
<dbReference type="InterPro" id="IPR036188">
    <property type="entry name" value="FAD/NAD-bd_sf"/>
</dbReference>
<dbReference type="InterPro" id="IPR050562">
    <property type="entry name" value="FAD_mOase_fung"/>
</dbReference>
<dbReference type="PANTHER" id="PTHR47356:SF2">
    <property type="entry name" value="FAD-BINDING DOMAIN-CONTAINING PROTEIN-RELATED"/>
    <property type="match status" value="1"/>
</dbReference>
<dbReference type="PANTHER" id="PTHR47356">
    <property type="entry name" value="FAD-DEPENDENT MONOOXYGENASE ASQG-RELATED"/>
    <property type="match status" value="1"/>
</dbReference>
<dbReference type="Pfam" id="PF01494">
    <property type="entry name" value="FAD_binding_3"/>
    <property type="match status" value="1"/>
</dbReference>
<dbReference type="PRINTS" id="PR00420">
    <property type="entry name" value="RNGMNOXGNASE"/>
</dbReference>
<dbReference type="SUPFAM" id="SSF51905">
    <property type="entry name" value="FAD/NAD(P)-binding domain"/>
    <property type="match status" value="1"/>
</dbReference>
<organism>
    <name type="scientific">Alternaria brassicicola</name>
    <name type="common">Dark leaf spot agent</name>
    <dbReference type="NCBI Taxonomy" id="29001"/>
    <lineage>
        <taxon>Eukaryota</taxon>
        <taxon>Fungi</taxon>
        <taxon>Dikarya</taxon>
        <taxon>Ascomycota</taxon>
        <taxon>Pezizomycotina</taxon>
        <taxon>Dothideomycetes</taxon>
        <taxon>Pleosporomycetidae</taxon>
        <taxon>Pleosporales</taxon>
        <taxon>Pleosporineae</taxon>
        <taxon>Pleosporaceae</taxon>
        <taxon>Alternaria</taxon>
        <taxon>Alternaria sect. Brassicicola</taxon>
    </lineage>
</organism>
<protein>
    <recommendedName>
        <fullName evidence="5">FAD-dependent monooxygenase DEP2</fullName>
        <ecNumber evidence="7">1.-.-.-</ecNumber>
    </recommendedName>
    <alternativeName>
        <fullName evidence="5">Depudecin biosynthesis cluster protein 2</fullName>
    </alternativeName>
</protein>
<keyword id="KW-0274">FAD</keyword>
<keyword id="KW-0285">Flavoprotein</keyword>
<keyword id="KW-0325">Glycoprotein</keyword>
<keyword id="KW-0472">Membrane</keyword>
<keyword id="KW-0503">Monooxygenase</keyword>
<keyword id="KW-0560">Oxidoreductase</keyword>
<keyword id="KW-0732">Signal</keyword>
<keyword id="KW-0812">Transmembrane</keyword>
<keyword id="KW-1133">Transmembrane helix</keyword>
<sequence>MEDGRSTFKVIIIGAGVTGLTLAHCLAKACIDYVLLDKGIVAPSFGTTITLQPHGCRILHQLGCLDAVLASCDVMSGAQCRDPSGKTFASNDFFRVVKKFTGYDTRTLDRKVFLRTMYEQLPDQSRVHERARVEEIIEDNEKTRVVLQDGQEFVGNLVIGTDGVHSKVREIMWDNANTAKPGMITVEEKRAMVTQYNAIVMACSPVPGLGSHDMEVTSNDKFSFLLLCQPDWISIIVHNKLPEDQQCTWPTRRRYTESDMEALVSRILECPITETVVFGELWKRRLKAQMISLEEGVLEHWFFGRIVLAGDAIHKVTPNSALGGNTAMEDAVTVANTLHTLLAAHPNKKPSTVELQDAFRDNYQNARMDRVRAIVKVGGDLTRQQAYDGWKRYLIQRWLTPIVGLDTLAKNIAGLCVTAPKLSYIDFEEKRGMLNWQDTVAADKELEMHHENVGGVRAEYHKSKWLLTSADWSGGFEAVFPQILGVLMVMWSSVWLFHLAFSRHCISGFGGEVWRTFGADNETSCVAK</sequence>
<reference key="1">
    <citation type="journal article" date="2009" name="Mol. Plant Microbe Interact.">
        <title>Biosynthesis and role in virulence of the histone deacetylase inhibitor depudecin from Alternaria brassicicola.</title>
        <authorList>
            <person name="Wight W.D."/>
            <person name="Kim K.-H."/>
            <person name="Lawrence C.B."/>
            <person name="Walton J.D."/>
        </authorList>
    </citation>
    <scope>NUCLEOTIDE SEQUENCE [GENOMIC DNA]</scope>
    <scope>DISRUPTION PHENOTYPE</scope>
    <scope>FUNCTION</scope>
    <scope>INDUCTION</scope>
    <scope>PATHWAY</scope>
    <source>
        <strain>MUCL 202097</strain>
    </source>
</reference>